<name>CDKC1_ORYSJ</name>
<organism>
    <name type="scientific">Oryza sativa subsp. japonica</name>
    <name type="common">Rice</name>
    <dbReference type="NCBI Taxonomy" id="39947"/>
    <lineage>
        <taxon>Eukaryota</taxon>
        <taxon>Viridiplantae</taxon>
        <taxon>Streptophyta</taxon>
        <taxon>Embryophyta</taxon>
        <taxon>Tracheophyta</taxon>
        <taxon>Spermatophyta</taxon>
        <taxon>Magnoliopsida</taxon>
        <taxon>Liliopsida</taxon>
        <taxon>Poales</taxon>
        <taxon>Poaceae</taxon>
        <taxon>BOP clade</taxon>
        <taxon>Oryzoideae</taxon>
        <taxon>Oryzeae</taxon>
        <taxon>Oryzinae</taxon>
        <taxon>Oryza</taxon>
        <taxon>Oryza sativa</taxon>
    </lineage>
</organism>
<comment type="catalytic activity">
    <reaction>
        <text>L-seryl-[protein] + ATP = O-phospho-L-seryl-[protein] + ADP + H(+)</text>
        <dbReference type="Rhea" id="RHEA:17989"/>
        <dbReference type="Rhea" id="RHEA-COMP:9863"/>
        <dbReference type="Rhea" id="RHEA-COMP:11604"/>
        <dbReference type="ChEBI" id="CHEBI:15378"/>
        <dbReference type="ChEBI" id="CHEBI:29999"/>
        <dbReference type="ChEBI" id="CHEBI:30616"/>
        <dbReference type="ChEBI" id="CHEBI:83421"/>
        <dbReference type="ChEBI" id="CHEBI:456216"/>
        <dbReference type="EC" id="2.7.11.22"/>
    </reaction>
</comment>
<comment type="catalytic activity">
    <reaction>
        <text>L-threonyl-[protein] + ATP = O-phospho-L-threonyl-[protein] + ADP + H(+)</text>
        <dbReference type="Rhea" id="RHEA:46608"/>
        <dbReference type="Rhea" id="RHEA-COMP:11060"/>
        <dbReference type="Rhea" id="RHEA-COMP:11605"/>
        <dbReference type="ChEBI" id="CHEBI:15378"/>
        <dbReference type="ChEBI" id="CHEBI:30013"/>
        <dbReference type="ChEBI" id="CHEBI:30616"/>
        <dbReference type="ChEBI" id="CHEBI:61977"/>
        <dbReference type="ChEBI" id="CHEBI:456216"/>
        <dbReference type="EC" id="2.7.11.22"/>
    </reaction>
</comment>
<comment type="catalytic activity">
    <reaction>
        <text>[DNA-directed RNA polymerase] + ATP = phospho-[DNA-directed RNA polymerase] + ADP + H(+)</text>
        <dbReference type="Rhea" id="RHEA:10216"/>
        <dbReference type="Rhea" id="RHEA-COMP:11321"/>
        <dbReference type="Rhea" id="RHEA-COMP:11322"/>
        <dbReference type="ChEBI" id="CHEBI:15378"/>
        <dbReference type="ChEBI" id="CHEBI:30616"/>
        <dbReference type="ChEBI" id="CHEBI:43176"/>
        <dbReference type="ChEBI" id="CHEBI:68546"/>
        <dbReference type="ChEBI" id="CHEBI:456216"/>
        <dbReference type="EC" id="2.7.11.23"/>
    </reaction>
</comment>
<comment type="induction">
    <text evidence="5">By auxin. Down-regulated by cytokinin.</text>
</comment>
<comment type="similarity">
    <text evidence="6">Belongs to the protein kinase superfamily. CMGC Ser/Thr protein kinase family. CDC2/CDKX subfamily.</text>
</comment>
<keyword id="KW-0067">ATP-binding</keyword>
<keyword id="KW-0418">Kinase</keyword>
<keyword id="KW-0547">Nucleotide-binding</keyword>
<keyword id="KW-0597">Phosphoprotein</keyword>
<keyword id="KW-1185">Reference proteome</keyword>
<keyword id="KW-0723">Serine/threonine-protein kinase</keyword>
<keyword id="KW-0808">Transferase</keyword>
<protein>
    <recommendedName>
        <fullName>Cyclin-dependent kinase C-1</fullName>
        <shortName>CDKC;1</shortName>
        <ecNumber>2.7.11.22</ecNumber>
        <ecNumber>2.7.11.23</ecNumber>
    </recommendedName>
</protein>
<accession>Q6I5Y0</accession>
<accession>B7EMQ2</accession>
<reference key="1">
    <citation type="journal article" date="2005" name="Mol. Genet. Genomics">
        <title>A fine physical map of the rice chromosome 5.</title>
        <authorList>
            <person name="Cheng C.-H."/>
            <person name="Chung M.C."/>
            <person name="Liu S.-M."/>
            <person name="Chen S.-K."/>
            <person name="Kao F.Y."/>
            <person name="Lin S.-J."/>
            <person name="Hsiao S.-H."/>
            <person name="Tseng I.C."/>
            <person name="Hsing Y.-I.C."/>
            <person name="Wu H.-P."/>
            <person name="Chen C.-S."/>
            <person name="Shaw J.-F."/>
            <person name="Wu J."/>
            <person name="Matsumoto T."/>
            <person name="Sasaki T."/>
            <person name="Chen H.-C."/>
            <person name="Chow T.-Y."/>
        </authorList>
    </citation>
    <scope>NUCLEOTIDE SEQUENCE [LARGE SCALE GENOMIC DNA]</scope>
    <source>
        <strain>cv. Nipponbare</strain>
    </source>
</reference>
<reference key="2">
    <citation type="journal article" date="2005" name="Nature">
        <title>The map-based sequence of the rice genome.</title>
        <authorList>
            <consortium name="International rice genome sequencing project (IRGSP)"/>
        </authorList>
    </citation>
    <scope>NUCLEOTIDE SEQUENCE [LARGE SCALE GENOMIC DNA]</scope>
    <source>
        <strain>cv. Nipponbare</strain>
    </source>
</reference>
<reference key="3">
    <citation type="journal article" date="2008" name="Nucleic Acids Res.">
        <title>The rice annotation project database (RAP-DB): 2008 update.</title>
        <authorList>
            <consortium name="The rice annotation project (RAP)"/>
        </authorList>
    </citation>
    <scope>GENOME REANNOTATION</scope>
    <source>
        <strain>cv. Nipponbare</strain>
    </source>
</reference>
<reference key="4">
    <citation type="journal article" date="2013" name="Rice">
        <title>Improvement of the Oryza sativa Nipponbare reference genome using next generation sequence and optical map data.</title>
        <authorList>
            <person name="Kawahara Y."/>
            <person name="de la Bastide M."/>
            <person name="Hamilton J.P."/>
            <person name="Kanamori H."/>
            <person name="McCombie W.R."/>
            <person name="Ouyang S."/>
            <person name="Schwartz D.C."/>
            <person name="Tanaka T."/>
            <person name="Wu J."/>
            <person name="Zhou S."/>
            <person name="Childs K.L."/>
            <person name="Davidson R.M."/>
            <person name="Lin H."/>
            <person name="Quesada-Ocampo L."/>
            <person name="Vaillancourt B."/>
            <person name="Sakai H."/>
            <person name="Lee S.S."/>
            <person name="Kim J."/>
            <person name="Numa H."/>
            <person name="Itoh T."/>
            <person name="Buell C.R."/>
            <person name="Matsumoto T."/>
        </authorList>
    </citation>
    <scope>GENOME REANNOTATION</scope>
    <source>
        <strain>cv. Nipponbare</strain>
    </source>
</reference>
<reference key="5">
    <citation type="journal article" date="2005" name="PLoS Biol.">
        <title>The genomes of Oryza sativa: a history of duplications.</title>
        <authorList>
            <person name="Yu J."/>
            <person name="Wang J."/>
            <person name="Lin W."/>
            <person name="Li S."/>
            <person name="Li H."/>
            <person name="Zhou J."/>
            <person name="Ni P."/>
            <person name="Dong W."/>
            <person name="Hu S."/>
            <person name="Zeng C."/>
            <person name="Zhang J."/>
            <person name="Zhang Y."/>
            <person name="Li R."/>
            <person name="Xu Z."/>
            <person name="Li S."/>
            <person name="Li X."/>
            <person name="Zheng H."/>
            <person name="Cong L."/>
            <person name="Lin L."/>
            <person name="Yin J."/>
            <person name="Geng J."/>
            <person name="Li G."/>
            <person name="Shi J."/>
            <person name="Liu J."/>
            <person name="Lv H."/>
            <person name="Li J."/>
            <person name="Wang J."/>
            <person name="Deng Y."/>
            <person name="Ran L."/>
            <person name="Shi X."/>
            <person name="Wang X."/>
            <person name="Wu Q."/>
            <person name="Li C."/>
            <person name="Ren X."/>
            <person name="Wang J."/>
            <person name="Wang X."/>
            <person name="Li D."/>
            <person name="Liu D."/>
            <person name="Zhang X."/>
            <person name="Ji Z."/>
            <person name="Zhao W."/>
            <person name="Sun Y."/>
            <person name="Zhang Z."/>
            <person name="Bao J."/>
            <person name="Han Y."/>
            <person name="Dong L."/>
            <person name="Ji J."/>
            <person name="Chen P."/>
            <person name="Wu S."/>
            <person name="Liu J."/>
            <person name="Xiao Y."/>
            <person name="Bu D."/>
            <person name="Tan J."/>
            <person name="Yang L."/>
            <person name="Ye C."/>
            <person name="Zhang J."/>
            <person name="Xu J."/>
            <person name="Zhou Y."/>
            <person name="Yu Y."/>
            <person name="Zhang B."/>
            <person name="Zhuang S."/>
            <person name="Wei H."/>
            <person name="Liu B."/>
            <person name="Lei M."/>
            <person name="Yu H."/>
            <person name="Li Y."/>
            <person name="Xu H."/>
            <person name="Wei S."/>
            <person name="He X."/>
            <person name="Fang L."/>
            <person name="Zhang Z."/>
            <person name="Zhang Y."/>
            <person name="Huang X."/>
            <person name="Su Z."/>
            <person name="Tong W."/>
            <person name="Li J."/>
            <person name="Tong Z."/>
            <person name="Li S."/>
            <person name="Ye J."/>
            <person name="Wang L."/>
            <person name="Fang L."/>
            <person name="Lei T."/>
            <person name="Chen C.-S."/>
            <person name="Chen H.-C."/>
            <person name="Xu Z."/>
            <person name="Li H."/>
            <person name="Huang H."/>
            <person name="Zhang F."/>
            <person name="Xu H."/>
            <person name="Li N."/>
            <person name="Zhao C."/>
            <person name="Li S."/>
            <person name="Dong L."/>
            <person name="Huang Y."/>
            <person name="Li L."/>
            <person name="Xi Y."/>
            <person name="Qi Q."/>
            <person name="Li W."/>
            <person name="Zhang B."/>
            <person name="Hu W."/>
            <person name="Zhang Y."/>
            <person name="Tian X."/>
            <person name="Jiao Y."/>
            <person name="Liang X."/>
            <person name="Jin J."/>
            <person name="Gao L."/>
            <person name="Zheng W."/>
            <person name="Hao B."/>
            <person name="Liu S.-M."/>
            <person name="Wang W."/>
            <person name="Yuan L."/>
            <person name="Cao M."/>
            <person name="McDermott J."/>
            <person name="Samudrala R."/>
            <person name="Wang J."/>
            <person name="Wong G.K.-S."/>
            <person name="Yang H."/>
        </authorList>
    </citation>
    <scope>NUCLEOTIDE SEQUENCE [LARGE SCALE GENOMIC DNA]</scope>
    <source>
        <strain>cv. Nipponbare</strain>
    </source>
</reference>
<reference key="6">
    <citation type="journal article" date="2003" name="Science">
        <title>Collection, mapping, and annotation of over 28,000 cDNA clones from japonica rice.</title>
        <authorList>
            <consortium name="The rice full-length cDNA consortium"/>
        </authorList>
    </citation>
    <scope>NUCLEOTIDE SEQUENCE [LARGE SCALE MRNA]</scope>
    <source>
        <strain>cv. Nipponbare</strain>
    </source>
</reference>
<reference key="7">
    <citation type="journal article" date="2007" name="Plant Mol. Biol.">
        <title>Genome-wide identification and expression analysis of rice cell cycle genes.</title>
        <authorList>
            <person name="Guo J."/>
            <person name="Song J."/>
            <person name="Wang F."/>
            <person name="Zhang X.S."/>
        </authorList>
    </citation>
    <scope>INDUCTION</scope>
    <scope>GENE FAMILY</scope>
</reference>
<sequence length="519" mass="57451">MAVAAPGQLNLDESPSWGSRSVDCFEKLEQIGEGTYGQVYMARETETQEIVALKKIRMDNEREGFPITAIREIKILKKLHHQNVIQLKEIVTSPGPERDEQGKPIHGNKYKGSIYMVFEYMDHDLTGLADRPGMRFTVPQIKCYMKQLLTGLHYCHINQVLHRDIKGSNLLIDNEGNLKLADFGLARSFSNDHNGNLTNRVITLWYRPPELLLGSTKYGPAVDMWSVGCIFAELLNGKPILPGKNEPEQLSKIFDVCGTPDESNWPGVTKMPWYNNFKPPRQLKRRVKEYFKHFDRLALDLLEKMLTLDPAQRISAQDALDAEYFWSDPLPCDPKSLPKYESSHEFQTKKKRQQMRQADEAAKRQKTQHPQPHGRLPPIQQTGQPHPQIRPGQPMNNPHAPMAAGPGHHYAKPRGPGGSSRYPQGGNQGGGYPNRGGQGGGGSYGNAPYPQQGRGPPPPYPGSGMAGTGGPRGGVGGGYGGGSNYPQQGGPYGPSGPGRGSNYPQQGGSRNQQQYGNWQ</sequence>
<proteinExistence type="evidence at transcript level"/>
<feature type="chain" id="PRO_0000296100" description="Cyclin-dependent kinase C-1">
    <location>
        <begin position="1"/>
        <end position="519"/>
    </location>
</feature>
<feature type="domain" description="Protein kinase" evidence="2">
    <location>
        <begin position="25"/>
        <end position="325"/>
    </location>
</feature>
<feature type="region of interest" description="Disordered" evidence="4">
    <location>
        <begin position="336"/>
        <end position="519"/>
    </location>
</feature>
<feature type="compositionally biased region" description="Basic and acidic residues" evidence="4">
    <location>
        <begin position="336"/>
        <end position="348"/>
    </location>
</feature>
<feature type="compositionally biased region" description="Gly residues" evidence="4">
    <location>
        <begin position="426"/>
        <end position="444"/>
    </location>
</feature>
<feature type="compositionally biased region" description="Low complexity" evidence="4">
    <location>
        <begin position="445"/>
        <end position="454"/>
    </location>
</feature>
<feature type="compositionally biased region" description="Gly residues" evidence="4">
    <location>
        <begin position="464"/>
        <end position="483"/>
    </location>
</feature>
<feature type="compositionally biased region" description="Gly residues" evidence="4">
    <location>
        <begin position="490"/>
        <end position="499"/>
    </location>
</feature>
<feature type="compositionally biased region" description="Polar residues" evidence="4">
    <location>
        <begin position="505"/>
        <end position="519"/>
    </location>
</feature>
<feature type="active site" description="Proton acceptor" evidence="2 3">
    <location>
        <position position="164"/>
    </location>
</feature>
<feature type="binding site" evidence="2">
    <location>
        <begin position="31"/>
        <end position="39"/>
    </location>
    <ligand>
        <name>ATP</name>
        <dbReference type="ChEBI" id="CHEBI:30616"/>
    </ligand>
</feature>
<feature type="binding site" evidence="2">
    <location>
        <position position="54"/>
    </location>
    <ligand>
        <name>ATP</name>
        <dbReference type="ChEBI" id="CHEBI:30616"/>
    </ligand>
</feature>
<feature type="modified residue" description="Phosphothreonine" evidence="1">
    <location>
        <position position="35"/>
    </location>
</feature>
<feature type="modified residue" description="Phosphotyrosine" evidence="1">
    <location>
        <position position="36"/>
    </location>
</feature>
<feature type="modified residue" description="Phosphothreonine" evidence="1">
    <location>
        <position position="198"/>
    </location>
</feature>
<dbReference type="EC" id="2.7.11.22"/>
<dbReference type="EC" id="2.7.11.23"/>
<dbReference type="EMBL" id="AC105773">
    <property type="protein sequence ID" value="AAT47442.1"/>
    <property type="molecule type" value="Genomic_DNA"/>
</dbReference>
<dbReference type="EMBL" id="AP008211">
    <property type="protein sequence ID" value="BAF17350.1"/>
    <property type="molecule type" value="Genomic_DNA"/>
</dbReference>
<dbReference type="EMBL" id="AP014961">
    <property type="protein sequence ID" value="BAS93836.1"/>
    <property type="molecule type" value="Genomic_DNA"/>
</dbReference>
<dbReference type="EMBL" id="CM000142">
    <property type="protein sequence ID" value="EEE63594.1"/>
    <property type="molecule type" value="Genomic_DNA"/>
</dbReference>
<dbReference type="EMBL" id="AK073808">
    <property type="protein sequence ID" value="BAG93649.1"/>
    <property type="molecule type" value="mRNA"/>
</dbReference>
<dbReference type="RefSeq" id="XP_015637332.1">
    <property type="nucleotide sequence ID" value="XM_015781846.1"/>
</dbReference>
<dbReference type="SMR" id="Q6I5Y0"/>
<dbReference type="FunCoup" id="Q6I5Y0">
    <property type="interactions" value="2734"/>
</dbReference>
<dbReference type="STRING" id="39947.Q6I5Y0"/>
<dbReference type="PaxDb" id="39947-Q6I5Y0"/>
<dbReference type="EnsemblPlants" id="Os05t0389700-01">
    <property type="protein sequence ID" value="Os05t0389700-01"/>
    <property type="gene ID" value="Os05g0389700"/>
</dbReference>
<dbReference type="Gramene" id="Os05t0389700-01">
    <property type="protein sequence ID" value="Os05t0389700-01"/>
    <property type="gene ID" value="Os05g0389700"/>
</dbReference>
<dbReference type="KEGG" id="dosa:Os05g0389700"/>
<dbReference type="eggNOG" id="KOG0600">
    <property type="taxonomic scope" value="Eukaryota"/>
</dbReference>
<dbReference type="HOGENOM" id="CLU_000288_181_1_1"/>
<dbReference type="InParanoid" id="Q6I5Y0"/>
<dbReference type="OMA" id="FPHCDES"/>
<dbReference type="OrthoDB" id="28397at2759"/>
<dbReference type="Proteomes" id="UP000000763">
    <property type="component" value="Chromosome 5"/>
</dbReference>
<dbReference type="Proteomes" id="UP000007752">
    <property type="component" value="Chromosome 5"/>
</dbReference>
<dbReference type="Proteomes" id="UP000059680">
    <property type="component" value="Chromosome 5"/>
</dbReference>
<dbReference type="GO" id="GO:0000307">
    <property type="term" value="C:cyclin-dependent protein kinase holoenzyme complex"/>
    <property type="evidence" value="ECO:0000318"/>
    <property type="project" value="GO_Central"/>
</dbReference>
<dbReference type="GO" id="GO:0005634">
    <property type="term" value="C:nucleus"/>
    <property type="evidence" value="ECO:0000318"/>
    <property type="project" value="GO_Central"/>
</dbReference>
<dbReference type="GO" id="GO:0005524">
    <property type="term" value="F:ATP binding"/>
    <property type="evidence" value="ECO:0007669"/>
    <property type="project" value="UniProtKB-KW"/>
</dbReference>
<dbReference type="GO" id="GO:0004693">
    <property type="term" value="F:cyclin-dependent protein serine/threonine kinase activity"/>
    <property type="evidence" value="ECO:0007669"/>
    <property type="project" value="UniProtKB-EC"/>
</dbReference>
<dbReference type="GO" id="GO:0106310">
    <property type="term" value="F:protein serine kinase activity"/>
    <property type="evidence" value="ECO:0007669"/>
    <property type="project" value="RHEA"/>
</dbReference>
<dbReference type="GO" id="GO:0008353">
    <property type="term" value="F:RNA polymerase II CTD heptapeptide repeat kinase activity"/>
    <property type="evidence" value="ECO:0000318"/>
    <property type="project" value="GO_Central"/>
</dbReference>
<dbReference type="GO" id="GO:0032968">
    <property type="term" value="P:positive regulation of transcription elongation by RNA polymerase II"/>
    <property type="evidence" value="ECO:0000318"/>
    <property type="project" value="GO_Central"/>
</dbReference>
<dbReference type="CDD" id="cd07840">
    <property type="entry name" value="STKc_CDK9_like"/>
    <property type="match status" value="1"/>
</dbReference>
<dbReference type="FunFam" id="1.10.510.10:FF:000273">
    <property type="entry name" value="Cyclin-dependent kinase C-2"/>
    <property type="match status" value="1"/>
</dbReference>
<dbReference type="FunFam" id="3.30.200.20:FF:000272">
    <property type="entry name" value="Cyclin-dependent kinase C-2"/>
    <property type="match status" value="1"/>
</dbReference>
<dbReference type="Gene3D" id="3.30.200.20">
    <property type="entry name" value="Phosphorylase Kinase, domain 1"/>
    <property type="match status" value="1"/>
</dbReference>
<dbReference type="Gene3D" id="1.10.510.10">
    <property type="entry name" value="Transferase(Phosphotransferase) domain 1"/>
    <property type="match status" value="1"/>
</dbReference>
<dbReference type="InterPro" id="IPR050108">
    <property type="entry name" value="CDK"/>
</dbReference>
<dbReference type="InterPro" id="IPR011009">
    <property type="entry name" value="Kinase-like_dom_sf"/>
</dbReference>
<dbReference type="InterPro" id="IPR000719">
    <property type="entry name" value="Prot_kinase_dom"/>
</dbReference>
<dbReference type="InterPro" id="IPR017441">
    <property type="entry name" value="Protein_kinase_ATP_BS"/>
</dbReference>
<dbReference type="InterPro" id="IPR008271">
    <property type="entry name" value="Ser/Thr_kinase_AS"/>
</dbReference>
<dbReference type="PANTHER" id="PTHR24056">
    <property type="entry name" value="CELL DIVISION PROTEIN KINASE"/>
    <property type="match status" value="1"/>
</dbReference>
<dbReference type="PANTHER" id="PTHR24056:SF546">
    <property type="entry name" value="CYCLIN-DEPENDENT KINASE 12"/>
    <property type="match status" value="1"/>
</dbReference>
<dbReference type="Pfam" id="PF00069">
    <property type="entry name" value="Pkinase"/>
    <property type="match status" value="1"/>
</dbReference>
<dbReference type="SMART" id="SM00220">
    <property type="entry name" value="S_TKc"/>
    <property type="match status" value="1"/>
</dbReference>
<dbReference type="SUPFAM" id="SSF56112">
    <property type="entry name" value="Protein kinase-like (PK-like)"/>
    <property type="match status" value="1"/>
</dbReference>
<dbReference type="PROSITE" id="PS00107">
    <property type="entry name" value="PROTEIN_KINASE_ATP"/>
    <property type="match status" value="1"/>
</dbReference>
<dbReference type="PROSITE" id="PS50011">
    <property type="entry name" value="PROTEIN_KINASE_DOM"/>
    <property type="match status" value="1"/>
</dbReference>
<dbReference type="PROSITE" id="PS00108">
    <property type="entry name" value="PROTEIN_KINASE_ST"/>
    <property type="match status" value="1"/>
</dbReference>
<gene>
    <name type="primary">CDKC-1</name>
    <name type="ordered locus">Os05g0389700</name>
    <name type="ordered locus">LOC_Os05g32360</name>
    <name type="ORF">OJ1562_H01.5</name>
    <name evidence="7" type="ORF">OsJ_18411</name>
</gene>
<evidence type="ECO:0000250" key="1"/>
<evidence type="ECO:0000255" key="2">
    <source>
        <dbReference type="PROSITE-ProRule" id="PRU00159"/>
    </source>
</evidence>
<evidence type="ECO:0000255" key="3">
    <source>
        <dbReference type="PROSITE-ProRule" id="PRU10027"/>
    </source>
</evidence>
<evidence type="ECO:0000256" key="4">
    <source>
        <dbReference type="SAM" id="MobiDB-lite"/>
    </source>
</evidence>
<evidence type="ECO:0000269" key="5">
    <source>
    </source>
</evidence>
<evidence type="ECO:0000305" key="6"/>
<evidence type="ECO:0000312" key="7">
    <source>
        <dbReference type="EMBL" id="EEE63594.1"/>
    </source>
</evidence>